<evidence type="ECO:0000255" key="1">
    <source>
        <dbReference type="HAMAP-Rule" id="MF_01525"/>
    </source>
</evidence>
<evidence type="ECO:0000256" key="2">
    <source>
        <dbReference type="SAM" id="MobiDB-lite"/>
    </source>
</evidence>
<sequence length="198" mass="21332">MSYYAFEGLIPVVHPDAFVHPSAVLIGDVIVGAGVYIGPLASLRGDYGRLILEAGSNLQDGCIMHGYCDTDTIVHENGHIGHGAILHGCVVGRDALVGMNSVIMDGAVIGEESIVAAMSFVKAGFQGEARQLLVGSPARVLRQVTDQELHWKRLNTKEYQDLAIRCRTGLSETKPLTQVEENRPRLKGTTDVKPKSAQ</sequence>
<feature type="chain" id="PRO_1000200933" description="Carnitine operon protein CaiE">
    <location>
        <begin position="1"/>
        <end position="198"/>
    </location>
</feature>
<feature type="region of interest" description="Disordered" evidence="2">
    <location>
        <begin position="179"/>
        <end position="198"/>
    </location>
</feature>
<feature type="compositionally biased region" description="Basic and acidic residues" evidence="2">
    <location>
        <begin position="180"/>
        <end position="198"/>
    </location>
</feature>
<organism>
    <name type="scientific">Salmonella gallinarum (strain 287/91 / NCTC 13346)</name>
    <dbReference type="NCBI Taxonomy" id="550538"/>
    <lineage>
        <taxon>Bacteria</taxon>
        <taxon>Pseudomonadati</taxon>
        <taxon>Pseudomonadota</taxon>
        <taxon>Gammaproteobacteria</taxon>
        <taxon>Enterobacterales</taxon>
        <taxon>Enterobacteriaceae</taxon>
        <taxon>Salmonella</taxon>
    </lineage>
</organism>
<proteinExistence type="inferred from homology"/>
<comment type="function">
    <text evidence="1">Overproduction of CaiE stimulates the activity of CaiB and CaiD.</text>
</comment>
<comment type="pathway">
    <text evidence="1">Amine and polyamine metabolism; carnitine metabolism.</text>
</comment>
<comment type="similarity">
    <text evidence="1">Belongs to the transferase hexapeptide repeat family.</text>
</comment>
<protein>
    <recommendedName>
        <fullName evidence="1">Carnitine operon protein CaiE</fullName>
    </recommendedName>
</protein>
<reference key="1">
    <citation type="journal article" date="2008" name="Genome Res.">
        <title>Comparative genome analysis of Salmonella enteritidis PT4 and Salmonella gallinarum 287/91 provides insights into evolutionary and host adaptation pathways.</title>
        <authorList>
            <person name="Thomson N.R."/>
            <person name="Clayton D.J."/>
            <person name="Windhorst D."/>
            <person name="Vernikos G."/>
            <person name="Davidson S."/>
            <person name="Churcher C."/>
            <person name="Quail M.A."/>
            <person name="Stevens M."/>
            <person name="Jones M.A."/>
            <person name="Watson M."/>
            <person name="Barron A."/>
            <person name="Layton A."/>
            <person name="Pickard D."/>
            <person name="Kingsley R.A."/>
            <person name="Bignell A."/>
            <person name="Clark L."/>
            <person name="Harris B."/>
            <person name="Ormond D."/>
            <person name="Abdellah Z."/>
            <person name="Brooks K."/>
            <person name="Cherevach I."/>
            <person name="Chillingworth T."/>
            <person name="Woodward J."/>
            <person name="Norberczak H."/>
            <person name="Lord A."/>
            <person name="Arrowsmith C."/>
            <person name="Jagels K."/>
            <person name="Moule S."/>
            <person name="Mungall K."/>
            <person name="Saunders M."/>
            <person name="Whitehead S."/>
            <person name="Chabalgoity J.A."/>
            <person name="Maskell D."/>
            <person name="Humphreys T."/>
            <person name="Roberts M."/>
            <person name="Barrow P.A."/>
            <person name="Dougan G."/>
            <person name="Parkhill J."/>
        </authorList>
    </citation>
    <scope>NUCLEOTIDE SEQUENCE [LARGE SCALE GENOMIC DNA]</scope>
    <source>
        <strain>287/91 / NCTC 13346</strain>
    </source>
</reference>
<accession>B5RGA3</accession>
<name>CAIE_SALG2</name>
<keyword id="KW-0677">Repeat</keyword>
<keyword id="KW-0808">Transferase</keyword>
<gene>
    <name evidence="1" type="primary">caiE</name>
    <name type="ordered locus">SG0072</name>
</gene>
<dbReference type="EMBL" id="AM933173">
    <property type="protein sequence ID" value="CAR35979.1"/>
    <property type="molecule type" value="Genomic_DNA"/>
</dbReference>
<dbReference type="RefSeq" id="WP_000122863.1">
    <property type="nucleotide sequence ID" value="NC_011274.1"/>
</dbReference>
<dbReference type="SMR" id="B5RGA3"/>
<dbReference type="KEGG" id="seg:SG0072"/>
<dbReference type="HOGENOM" id="CLU_064827_4_2_6"/>
<dbReference type="UniPathway" id="UPA00117"/>
<dbReference type="Proteomes" id="UP000008321">
    <property type="component" value="Chromosome"/>
</dbReference>
<dbReference type="GO" id="GO:0016740">
    <property type="term" value="F:transferase activity"/>
    <property type="evidence" value="ECO:0007669"/>
    <property type="project" value="UniProtKB-KW"/>
</dbReference>
<dbReference type="GO" id="GO:0009437">
    <property type="term" value="P:carnitine metabolic process"/>
    <property type="evidence" value="ECO:0007669"/>
    <property type="project" value="UniProtKB-UniRule"/>
</dbReference>
<dbReference type="CDD" id="cd04745">
    <property type="entry name" value="LbH_paaY_like"/>
    <property type="match status" value="1"/>
</dbReference>
<dbReference type="FunFam" id="2.160.10.10:FF:000012">
    <property type="entry name" value="Carnitine operon protein CaiE"/>
    <property type="match status" value="1"/>
</dbReference>
<dbReference type="Gene3D" id="2.160.10.10">
    <property type="entry name" value="Hexapeptide repeat proteins"/>
    <property type="match status" value="1"/>
</dbReference>
<dbReference type="HAMAP" id="MF_01525">
    <property type="entry name" value="CaiE"/>
    <property type="match status" value="1"/>
</dbReference>
<dbReference type="InterPro" id="IPR023446">
    <property type="entry name" value="CaiE"/>
</dbReference>
<dbReference type="InterPro" id="IPR001451">
    <property type="entry name" value="Hexapep"/>
</dbReference>
<dbReference type="InterPro" id="IPR050484">
    <property type="entry name" value="Transf_Hexapept/Carb_Anhydrase"/>
</dbReference>
<dbReference type="InterPro" id="IPR011004">
    <property type="entry name" value="Trimer_LpxA-like_sf"/>
</dbReference>
<dbReference type="NCBIfam" id="NF010150">
    <property type="entry name" value="PRK13627.1"/>
    <property type="match status" value="1"/>
</dbReference>
<dbReference type="PANTHER" id="PTHR13061">
    <property type="entry name" value="DYNACTIN SUBUNIT P25"/>
    <property type="match status" value="1"/>
</dbReference>
<dbReference type="PANTHER" id="PTHR13061:SF29">
    <property type="entry name" value="GAMMA CARBONIC ANHYDRASE-LIKE 1, MITOCHONDRIAL-RELATED"/>
    <property type="match status" value="1"/>
</dbReference>
<dbReference type="Pfam" id="PF00132">
    <property type="entry name" value="Hexapep"/>
    <property type="match status" value="2"/>
</dbReference>
<dbReference type="SUPFAM" id="SSF51161">
    <property type="entry name" value="Trimeric LpxA-like enzymes"/>
    <property type="match status" value="1"/>
</dbReference>